<reference key="1">
    <citation type="journal article" date="1991" name="Neuron">
        <title>Evolutionary studies of the nerve growth factor family reveal a novel member abundantly expressed in Xenopus ovary.</title>
        <authorList>
            <person name="Hallboeoek F."/>
            <person name="Ibanez C.F."/>
            <person name="Persson H."/>
        </authorList>
    </citation>
    <scope>NUCLEOTIDE SEQUENCE [GENOMIC DNA]</scope>
</reference>
<comment type="function">
    <text>Promotes the survival of neuronal populations that are all located either in the central nervous system or directly connected to it.</text>
</comment>
<comment type="subcellular location">
    <subcellularLocation>
        <location>Secreted</location>
    </subcellularLocation>
</comment>
<comment type="similarity">
    <text evidence="1">Belongs to the NGF-beta family.</text>
</comment>
<dbReference type="SMR" id="P25431"/>
<dbReference type="GO" id="GO:0030424">
    <property type="term" value="C:axon"/>
    <property type="evidence" value="ECO:0007669"/>
    <property type="project" value="TreeGrafter"/>
</dbReference>
<dbReference type="GO" id="GO:0030425">
    <property type="term" value="C:dendrite"/>
    <property type="evidence" value="ECO:0007669"/>
    <property type="project" value="TreeGrafter"/>
</dbReference>
<dbReference type="GO" id="GO:0005615">
    <property type="term" value="C:extracellular space"/>
    <property type="evidence" value="ECO:0007669"/>
    <property type="project" value="TreeGrafter"/>
</dbReference>
<dbReference type="GO" id="GO:0008021">
    <property type="term" value="C:synaptic vesicle"/>
    <property type="evidence" value="ECO:0007669"/>
    <property type="project" value="TreeGrafter"/>
</dbReference>
<dbReference type="GO" id="GO:0008083">
    <property type="term" value="F:growth factor activity"/>
    <property type="evidence" value="ECO:0007669"/>
    <property type="project" value="UniProtKB-KW"/>
</dbReference>
<dbReference type="GO" id="GO:0005163">
    <property type="term" value="F:nerve growth factor receptor binding"/>
    <property type="evidence" value="ECO:0007669"/>
    <property type="project" value="TreeGrafter"/>
</dbReference>
<dbReference type="GO" id="GO:0007169">
    <property type="term" value="P:cell surface receptor protein tyrosine kinase signaling pathway"/>
    <property type="evidence" value="ECO:0007669"/>
    <property type="project" value="TreeGrafter"/>
</dbReference>
<dbReference type="GO" id="GO:0050804">
    <property type="term" value="P:modulation of chemical synaptic transmission"/>
    <property type="evidence" value="ECO:0007669"/>
    <property type="project" value="TreeGrafter"/>
</dbReference>
<dbReference type="GO" id="GO:0043524">
    <property type="term" value="P:negative regulation of neuron apoptotic process"/>
    <property type="evidence" value="ECO:0007669"/>
    <property type="project" value="TreeGrafter"/>
</dbReference>
<dbReference type="GO" id="GO:0021675">
    <property type="term" value="P:nerve development"/>
    <property type="evidence" value="ECO:0007669"/>
    <property type="project" value="TreeGrafter"/>
</dbReference>
<dbReference type="GO" id="GO:0038180">
    <property type="term" value="P:nerve growth factor signaling pathway"/>
    <property type="evidence" value="ECO:0007669"/>
    <property type="project" value="TreeGrafter"/>
</dbReference>
<dbReference type="GO" id="GO:0048812">
    <property type="term" value="P:neuron projection morphogenesis"/>
    <property type="evidence" value="ECO:0007669"/>
    <property type="project" value="TreeGrafter"/>
</dbReference>
<dbReference type="Gene3D" id="2.10.90.10">
    <property type="entry name" value="Cystine-knot cytokines"/>
    <property type="match status" value="1"/>
</dbReference>
<dbReference type="InterPro" id="IPR029034">
    <property type="entry name" value="Cystine-knot_cytokine"/>
</dbReference>
<dbReference type="InterPro" id="IPR020408">
    <property type="entry name" value="Nerve_growth_factor-like"/>
</dbReference>
<dbReference type="InterPro" id="IPR002072">
    <property type="entry name" value="Nerve_growth_factor-rel"/>
</dbReference>
<dbReference type="InterPro" id="IPR019846">
    <property type="entry name" value="Nerve_growth_factor_CS"/>
</dbReference>
<dbReference type="PANTHER" id="PTHR11589:SF3">
    <property type="entry name" value="BRAIN-DERIVED NEUROTROPHIC FACTOR"/>
    <property type="match status" value="1"/>
</dbReference>
<dbReference type="PANTHER" id="PTHR11589">
    <property type="entry name" value="NERVE GROWTH FACTOR NGF -RELATED"/>
    <property type="match status" value="1"/>
</dbReference>
<dbReference type="Pfam" id="PF00243">
    <property type="entry name" value="NGF"/>
    <property type="match status" value="1"/>
</dbReference>
<dbReference type="SMART" id="SM00140">
    <property type="entry name" value="NGF"/>
    <property type="match status" value="1"/>
</dbReference>
<dbReference type="SUPFAM" id="SSF57501">
    <property type="entry name" value="Cystine-knot cytokines"/>
    <property type="match status" value="1"/>
</dbReference>
<dbReference type="PROSITE" id="PS00248">
    <property type="entry name" value="NGF_1"/>
    <property type="match status" value="1"/>
</dbReference>
<dbReference type="PROSITE" id="PS50270">
    <property type="entry name" value="NGF_2"/>
    <property type="match status" value="1"/>
</dbReference>
<protein>
    <recommendedName>
        <fullName evidence="1">Neurotrophic factor BDNF</fullName>
    </recommendedName>
    <alternativeName>
        <fullName>Brain-derived neurotrophic factor</fullName>
    </alternativeName>
</protein>
<proteinExistence type="inferred from homology"/>
<gene>
    <name type="primary">BDNF</name>
</gene>
<keyword id="KW-0339">Growth factor</keyword>
<keyword id="KW-0964">Secreted</keyword>
<organism>
    <name type="scientific">Macrovipera lebetinus</name>
    <name type="common">Levantine viper</name>
    <name type="synonym">Vipera lebetina</name>
    <dbReference type="NCBI Taxonomy" id="3148341"/>
    <lineage>
        <taxon>Eukaryota</taxon>
        <taxon>Metazoa</taxon>
        <taxon>Chordata</taxon>
        <taxon>Craniata</taxon>
        <taxon>Vertebrata</taxon>
        <taxon>Euteleostomi</taxon>
        <taxon>Lepidosauria</taxon>
        <taxon>Squamata</taxon>
        <taxon>Bifurcata</taxon>
        <taxon>Unidentata</taxon>
        <taxon>Episquamata</taxon>
        <taxon>Toxicofera</taxon>
        <taxon>Serpentes</taxon>
        <taxon>Colubroidea</taxon>
        <taxon>Viperidae</taxon>
        <taxon>Viperinae</taxon>
        <taxon>Macrovipera</taxon>
    </lineage>
</organism>
<name>BDNF_MACLB</name>
<evidence type="ECO:0000305" key="1"/>
<sequence>KCSTKGYAKEGCRGIDKRYWNSQCRTTQSYVRALTMDNKKRIG</sequence>
<feature type="chain" id="PRO_0000159610" description="Neurotrophic factor BDNF">
    <location>
        <begin position="1" status="less than"/>
        <end position="43" status="greater than"/>
    </location>
</feature>
<feature type="non-terminal residue">
    <location>
        <position position="1"/>
    </location>
</feature>
<feature type="non-terminal residue">
    <location>
        <position position="43"/>
    </location>
</feature>
<accession>P25431</accession>